<reference evidence="6" key="1">
    <citation type="journal article" date="2005" name="Genome Res.">
        <title>Comparative genome sequencing of Drosophila pseudoobscura: chromosomal, gene, and cis-element evolution.</title>
        <authorList>
            <person name="Richards S."/>
            <person name="Liu Y."/>
            <person name="Bettencourt B.R."/>
            <person name="Hradecky P."/>
            <person name="Letovsky S."/>
            <person name="Nielsen R."/>
            <person name="Thornton K."/>
            <person name="Hubisz M.J."/>
            <person name="Chen R."/>
            <person name="Meisel R.P."/>
            <person name="Couronne O."/>
            <person name="Hua S."/>
            <person name="Smith M.A."/>
            <person name="Zhang P."/>
            <person name="Liu J."/>
            <person name="Bussemaker H.J."/>
            <person name="van Batenburg M.F."/>
            <person name="Howells S.L."/>
            <person name="Scherer S.E."/>
            <person name="Sodergren E."/>
            <person name="Matthews B.B."/>
            <person name="Crosby M.A."/>
            <person name="Schroeder A.J."/>
            <person name="Ortiz-Barrientos D."/>
            <person name="Rives C.M."/>
            <person name="Metzker M.L."/>
            <person name="Muzny D.M."/>
            <person name="Scott G."/>
            <person name="Steffen D."/>
            <person name="Wheeler D.A."/>
            <person name="Worley K.C."/>
            <person name="Havlak P."/>
            <person name="Durbin K.J."/>
            <person name="Egan A."/>
            <person name="Gill R."/>
            <person name="Hume J."/>
            <person name="Morgan M.B."/>
            <person name="Miner G."/>
            <person name="Hamilton C."/>
            <person name="Huang Y."/>
            <person name="Waldron L."/>
            <person name="Verduzco D."/>
            <person name="Clerc-Blankenburg K.P."/>
            <person name="Dubchak I."/>
            <person name="Noor M.A.F."/>
            <person name="Anderson W."/>
            <person name="White K.P."/>
            <person name="Clark A.G."/>
            <person name="Schaeffer S.W."/>
            <person name="Gelbart W.M."/>
            <person name="Weinstock G.M."/>
            <person name="Gibbs R.A."/>
        </authorList>
    </citation>
    <scope>NUCLEOTIDE SEQUENCE [LARGE SCALE GENOMIC DNA]</scope>
    <source>
        <strain>MV2-25 / Tucson 14011-0121.94</strain>
    </source>
</reference>
<gene>
    <name evidence="3" type="primary">wls</name>
    <name type="ORF">GA19442</name>
</gene>
<comment type="function">
    <text evidence="1">A segment polarity gene required for wingless (wg)-dependent patterning processes, acting in both wg-sending cells and wg-target cells. In non-neuronal cells wls directs wg secretion. The wls traffic loop encompasses the Golgi, the cell surface, an endocytic compartment and a retrograde route leading back to the Golgi, and involves clathrin-mediated endocytosis and the retromer complex (a conserved protein complex consisting of Vps35 and Vps26). In neuronal cells (the larval motorneuron NMJ), the wg signal moves across the synapse via the release of wls-containing exosome-like vesicles. Postsynaptic wls is required for the trafficking of fz2 through the fz2-interacting protein Grip (By similarity).</text>
</comment>
<comment type="subunit">
    <text evidence="1">Interacts with wg; in the Golgi. Interacts with Vps35, a component of the retromer complex; wls stability is regulated by Vps35 (By similarity).</text>
</comment>
<comment type="subcellular location">
    <subcellularLocation>
        <location evidence="3">Presynaptic cell membrane</location>
        <topology evidence="3">Multi-pass membrane protein</topology>
    </subcellularLocation>
    <subcellularLocation>
        <location evidence="3">Postsynaptic cell membrane</location>
        <topology evidence="3">Multi-pass membrane protein</topology>
    </subcellularLocation>
    <subcellularLocation>
        <location evidence="3">Cell membrane</location>
        <topology evidence="3">Multi-pass membrane protein</topology>
    </subcellularLocation>
    <subcellularLocation>
        <location evidence="3">Endoplasmic reticulum membrane</location>
        <topology evidence="3">Multi-pass membrane protein</topology>
    </subcellularLocation>
    <subcellularLocation>
        <location evidence="3">Endosome membrane</location>
        <topology evidence="3">Multi-pass membrane protein</topology>
    </subcellularLocation>
    <subcellularLocation>
        <location evidence="3">Golgi apparatus membrane</location>
        <topology evidence="3">Multi-pass membrane protein</topology>
    </subcellularLocation>
    <text evidence="1">In non-neuronal cells, wls binds to wg in the Golgi and accompanies it to the plasma membrane where the two proteins dissociate. Wg is secreted and wls is then internalized and returns to the Golgi apparatus in a retromer-dependent manner. Wls and wg colocalize in the Golgi apparatus in wg-producing cells, and reduced expression is seen in non-producing cells. Endoplasmic reticulum expression is unchanged in wg-producing versus non-producing cells. In neuronal cells, wls is localized both pre- and postsynaptically and is transferred trans-synaptically from the pre- to the postsynaptic compartment (By similarity).</text>
</comment>
<comment type="similarity">
    <text evidence="4">Belongs to the wntless family.</text>
</comment>
<keyword id="KW-1003">Cell membrane</keyword>
<keyword id="KW-0966">Cell projection</keyword>
<keyword id="KW-0217">Developmental protein</keyword>
<keyword id="KW-0256">Endoplasmic reticulum</keyword>
<keyword id="KW-0967">Endosome</keyword>
<keyword id="KW-0325">Glycoprotein</keyword>
<keyword id="KW-0333">Golgi apparatus</keyword>
<keyword id="KW-0472">Membrane</keyword>
<keyword id="KW-0628">Postsynaptic cell membrane</keyword>
<keyword id="KW-1185">Reference proteome</keyword>
<keyword id="KW-0709">Segmentation polarity protein</keyword>
<keyword id="KW-0770">Synapse</keyword>
<keyword id="KW-0812">Transmembrane</keyword>
<keyword id="KW-1133">Transmembrane helix</keyword>
<keyword id="KW-0879">Wnt signaling pathway</keyword>
<protein>
    <recommendedName>
        <fullName evidence="3">Protein wntless</fullName>
    </recommendedName>
</protein>
<dbReference type="EMBL" id="CH379069">
    <property type="protein sequence ID" value="EAL29672.2"/>
    <property type="molecule type" value="Genomic_DNA"/>
</dbReference>
<dbReference type="RefSeq" id="XP_001353936.2">
    <property type="nucleotide sequence ID" value="XM_001353900.3"/>
</dbReference>
<dbReference type="SMR" id="Q2LZ37"/>
<dbReference type="FunCoup" id="Q2LZ37">
    <property type="interactions" value="640"/>
</dbReference>
<dbReference type="STRING" id="46245.Q2LZ37"/>
<dbReference type="GlyCosmos" id="Q2LZ37">
    <property type="glycosylation" value="1 site, No reported glycans"/>
</dbReference>
<dbReference type="EnsemblMetazoa" id="FBtr0276995">
    <property type="protein sequence ID" value="FBpp0275433"/>
    <property type="gene ID" value="FBgn0079438"/>
</dbReference>
<dbReference type="GeneID" id="4813739"/>
<dbReference type="KEGG" id="dpo:4813739"/>
<dbReference type="CTD" id="79971"/>
<dbReference type="eggNOG" id="ENOG502QSE2">
    <property type="taxonomic scope" value="Eukaryota"/>
</dbReference>
<dbReference type="HOGENOM" id="CLU_022911_0_0_1"/>
<dbReference type="InParanoid" id="Q2LZ37"/>
<dbReference type="OMA" id="GQWKWDE"/>
<dbReference type="Proteomes" id="UP000001819">
    <property type="component" value="Chromosome X"/>
</dbReference>
<dbReference type="Bgee" id="FBgn0079438">
    <property type="expression patterns" value="Expressed in female reproductive system and 2 other cell types or tissues"/>
</dbReference>
<dbReference type="GO" id="GO:0042995">
    <property type="term" value="C:cell projection"/>
    <property type="evidence" value="ECO:0007669"/>
    <property type="project" value="UniProtKB-KW"/>
</dbReference>
<dbReference type="GO" id="GO:0005789">
    <property type="term" value="C:endoplasmic reticulum membrane"/>
    <property type="evidence" value="ECO:0000250"/>
    <property type="project" value="UniProtKB"/>
</dbReference>
<dbReference type="GO" id="GO:0010008">
    <property type="term" value="C:endosome membrane"/>
    <property type="evidence" value="ECO:0000250"/>
    <property type="project" value="UniProtKB"/>
</dbReference>
<dbReference type="GO" id="GO:0000139">
    <property type="term" value="C:Golgi membrane"/>
    <property type="evidence" value="ECO:0000250"/>
    <property type="project" value="UniProtKB"/>
</dbReference>
<dbReference type="GO" id="GO:0031594">
    <property type="term" value="C:neuromuscular junction"/>
    <property type="evidence" value="ECO:0000250"/>
    <property type="project" value="UniProtKB"/>
</dbReference>
<dbReference type="GO" id="GO:0005886">
    <property type="term" value="C:plasma membrane"/>
    <property type="evidence" value="ECO:0000250"/>
    <property type="project" value="UniProtKB"/>
</dbReference>
<dbReference type="GO" id="GO:0045211">
    <property type="term" value="C:postsynaptic membrane"/>
    <property type="evidence" value="ECO:0000250"/>
    <property type="project" value="UniProtKB"/>
</dbReference>
<dbReference type="GO" id="GO:0042734">
    <property type="term" value="C:presynaptic membrane"/>
    <property type="evidence" value="ECO:0000250"/>
    <property type="project" value="UniProtKB"/>
</dbReference>
<dbReference type="GO" id="GO:0030672">
    <property type="term" value="C:synaptic vesicle membrane"/>
    <property type="evidence" value="ECO:0000250"/>
    <property type="project" value="UniProtKB"/>
</dbReference>
<dbReference type="GO" id="GO:0017147">
    <property type="term" value="F:Wnt-protein binding"/>
    <property type="evidence" value="ECO:0000250"/>
    <property type="project" value="UniProtKB"/>
</dbReference>
<dbReference type="GO" id="GO:0008587">
    <property type="term" value="P:imaginal disc-derived wing margin morphogenesis"/>
    <property type="evidence" value="ECO:0000250"/>
    <property type="project" value="UniProtKB"/>
</dbReference>
<dbReference type="GO" id="GO:0006886">
    <property type="term" value="P:intracellular protein transport"/>
    <property type="evidence" value="ECO:0007669"/>
    <property type="project" value="TreeGrafter"/>
</dbReference>
<dbReference type="GO" id="GO:0050714">
    <property type="term" value="P:positive regulation of protein secretion"/>
    <property type="evidence" value="ECO:0000250"/>
    <property type="project" value="UniProtKB"/>
</dbReference>
<dbReference type="GO" id="GO:0061357">
    <property type="term" value="P:positive regulation of Wnt protein secretion"/>
    <property type="evidence" value="ECO:0000250"/>
    <property type="project" value="ParkinsonsUK-UCL"/>
</dbReference>
<dbReference type="GO" id="GO:0030177">
    <property type="term" value="P:positive regulation of Wnt signaling pathway"/>
    <property type="evidence" value="ECO:0000250"/>
    <property type="project" value="UniProtKB"/>
</dbReference>
<dbReference type="GO" id="GO:0033157">
    <property type="term" value="P:regulation of intracellular protein transport"/>
    <property type="evidence" value="ECO:0000250"/>
    <property type="project" value="UniProtKB"/>
</dbReference>
<dbReference type="GO" id="GO:0007367">
    <property type="term" value="P:segment polarity determination"/>
    <property type="evidence" value="ECO:0000250"/>
    <property type="project" value="UniProtKB"/>
</dbReference>
<dbReference type="GO" id="GO:0061355">
    <property type="term" value="P:Wnt protein secretion"/>
    <property type="evidence" value="ECO:0007669"/>
    <property type="project" value="TreeGrafter"/>
</dbReference>
<dbReference type="GO" id="GO:0016055">
    <property type="term" value="P:Wnt signaling pathway"/>
    <property type="evidence" value="ECO:0007669"/>
    <property type="project" value="UniProtKB-KW"/>
</dbReference>
<dbReference type="InterPro" id="IPR047843">
    <property type="entry name" value="WLS-like_TM"/>
</dbReference>
<dbReference type="InterPro" id="IPR053936">
    <property type="entry name" value="WLS_GOLD"/>
</dbReference>
<dbReference type="InterPro" id="IPR009551">
    <property type="entry name" value="Wntless"/>
</dbReference>
<dbReference type="PANTHER" id="PTHR13449">
    <property type="entry name" value="INTEGRAL MEMBRANE PROTEIN GPR177"/>
    <property type="match status" value="1"/>
</dbReference>
<dbReference type="PANTHER" id="PTHR13449:SF2">
    <property type="entry name" value="PROTEIN WNTLESS HOMOLOG"/>
    <property type="match status" value="1"/>
</dbReference>
<dbReference type="Pfam" id="PF06664">
    <property type="entry name" value="WLS-like_TM"/>
    <property type="match status" value="1"/>
</dbReference>
<dbReference type="Pfam" id="PF21883">
    <property type="entry name" value="WLS_GOLD"/>
    <property type="match status" value="1"/>
</dbReference>
<organism>
    <name type="scientific">Drosophila pseudoobscura pseudoobscura</name>
    <name type="common">Fruit fly</name>
    <dbReference type="NCBI Taxonomy" id="46245"/>
    <lineage>
        <taxon>Eukaryota</taxon>
        <taxon>Metazoa</taxon>
        <taxon>Ecdysozoa</taxon>
        <taxon>Arthropoda</taxon>
        <taxon>Hexapoda</taxon>
        <taxon>Insecta</taxon>
        <taxon>Pterygota</taxon>
        <taxon>Neoptera</taxon>
        <taxon>Endopterygota</taxon>
        <taxon>Diptera</taxon>
        <taxon>Brachycera</taxon>
        <taxon>Muscomorpha</taxon>
        <taxon>Ephydroidea</taxon>
        <taxon>Drosophilidae</taxon>
        <taxon>Drosophila</taxon>
        <taxon>Sophophora</taxon>
    </lineage>
</organism>
<feature type="chain" id="PRO_0000390667" description="Protein wntless" evidence="4">
    <location>
        <begin position="1"/>
        <end position="562"/>
    </location>
</feature>
<feature type="topological domain" description="Cytoplasmic" evidence="2">
    <location>
        <begin position="1"/>
        <end position="13"/>
    </location>
</feature>
<feature type="transmembrane region" description="Helical; Name=1" evidence="4">
    <location>
        <begin position="14"/>
        <end position="34"/>
    </location>
</feature>
<feature type="topological domain" description="Lumenal" evidence="2">
    <location>
        <begin position="35"/>
        <end position="239"/>
    </location>
</feature>
<feature type="transmembrane region" description="Helical; Name=2" evidence="4">
    <location>
        <begin position="240"/>
        <end position="260"/>
    </location>
</feature>
<feature type="topological domain" description="Cytoplasmic" evidence="2">
    <location>
        <begin position="261"/>
        <end position="270"/>
    </location>
</feature>
<feature type="transmembrane region" description="Helical; Name=3" evidence="4">
    <location>
        <begin position="271"/>
        <end position="291"/>
    </location>
</feature>
<feature type="topological domain" description="Lumenal" evidence="2">
    <location>
        <begin position="292"/>
        <end position="311"/>
    </location>
</feature>
<feature type="transmembrane region" description="Helical; Name=4" evidence="4">
    <location>
        <begin position="312"/>
        <end position="332"/>
    </location>
</feature>
<feature type="topological domain" description="Cytoplasmic" evidence="2">
    <location>
        <begin position="333"/>
        <end position="344"/>
    </location>
</feature>
<feature type="transmembrane region" description="Helical; Name=5" evidence="4">
    <location>
        <begin position="345"/>
        <end position="365"/>
    </location>
</feature>
<feature type="topological domain" description="Lumenal" evidence="2">
    <location>
        <begin position="366"/>
        <end position="386"/>
    </location>
</feature>
<feature type="transmembrane region" description="Helical; Name=6" evidence="4">
    <location>
        <begin position="387"/>
        <end position="407"/>
    </location>
</feature>
<feature type="topological domain" description="Cytoplasmic" evidence="2">
    <location>
        <begin position="408"/>
        <end position="441"/>
    </location>
</feature>
<feature type="transmembrane region" description="Helical; Name=7" evidence="4">
    <location>
        <begin position="442"/>
        <end position="462"/>
    </location>
</feature>
<feature type="topological domain" description="Lumenal" evidence="2">
    <location>
        <begin position="463"/>
        <end position="482"/>
    </location>
</feature>
<feature type="transmembrane region" description="Helical; Name=8" evidence="4">
    <location>
        <begin position="483"/>
        <end position="503"/>
    </location>
</feature>
<feature type="topological domain" description="Cytoplasmic" evidence="2">
    <location>
        <begin position="504"/>
        <end position="562"/>
    </location>
</feature>
<feature type="region of interest" description="Disordered" evidence="5">
    <location>
        <begin position="538"/>
        <end position="562"/>
    </location>
</feature>
<feature type="compositionally biased region" description="Polar residues" evidence="5">
    <location>
        <begin position="539"/>
        <end position="556"/>
    </location>
</feature>
<feature type="glycosylation site" description="N-linked (GlcNAc...) asparagine" evidence="4">
    <location>
        <position position="58"/>
    </location>
</feature>
<accession>Q2LZ37</accession>
<sequence>MSGTILENLSGRKLSILVGSLLLCQVLCFLLGGLYAPVPAGHTNVLGSLCRENHARQNDTSFFLYSRGEGSCTQVTREEVEQDSMKLANQIVHVFQMPLPRDSRVLDYSRWQQNLIGVLQVEFGYDSSSELREPPKELQLTIDMRLAYRNKGDPDHAWKLYAHGVEHRYLDCVAAHIGSSETLYTCDMIPLFELGALHHSFYLLNLRFPLDTPKQMNLQFGHMHDLTLTAIHQNGGFTHVWLMLKTLLFPFVVGIMVWFWRRVHLLQRSPALLEYMLLYLGGALTFLNLPLEYLSLTIEMPYMLLLSDIRQGIFYAMLLSFWLVFAGEHMLIQDSSNKSTIRSRYWKHLSAVVVGCISLFVFDISERGVQLRNPFYSIWTTPLGAKVAMSFILLAGVSAAVYFLFLCYMISKVFKNIGDKRTSLPSMSQARRLHYEGLIYRFKFLMLATLLCAALTVTGFIMGQMAEGQWKWNDDVEIQLTSAFLTGVYGMWNIYIFALLILYAPSHKQWPTMHHSDETTQSNENIVASAASEEIEFSNLPSDSNPSEISSLTSFTRKVAFE</sequence>
<proteinExistence type="inferred from homology"/>
<name>WLS_DROPS</name>
<evidence type="ECO:0000250" key="1"/>
<evidence type="ECO:0000250" key="2">
    <source>
        <dbReference type="UniProtKB" id="Q5T9L3"/>
    </source>
</evidence>
<evidence type="ECO:0000250" key="3">
    <source>
        <dbReference type="UniProtKB" id="Q95ST2"/>
    </source>
</evidence>
<evidence type="ECO:0000255" key="4"/>
<evidence type="ECO:0000256" key="5">
    <source>
        <dbReference type="SAM" id="MobiDB-lite"/>
    </source>
</evidence>
<evidence type="ECO:0000312" key="6">
    <source>
        <dbReference type="EMBL" id="EAL29672.2"/>
    </source>
</evidence>